<gene>
    <name evidence="1" type="primary">hemF</name>
    <name type="ordered locus">Pfl01_0022</name>
</gene>
<reference key="1">
    <citation type="journal article" date="2009" name="Genome Biol.">
        <title>Genomic and genetic analyses of diversity and plant interactions of Pseudomonas fluorescens.</title>
        <authorList>
            <person name="Silby M.W."/>
            <person name="Cerdeno-Tarraga A.M."/>
            <person name="Vernikos G.S."/>
            <person name="Giddens S.R."/>
            <person name="Jackson R.W."/>
            <person name="Preston G.M."/>
            <person name="Zhang X.-X."/>
            <person name="Moon C.D."/>
            <person name="Gehrig S.M."/>
            <person name="Godfrey S.A.C."/>
            <person name="Knight C.G."/>
            <person name="Malone J.G."/>
            <person name="Robinson Z."/>
            <person name="Spiers A.J."/>
            <person name="Harris S."/>
            <person name="Challis G.L."/>
            <person name="Yaxley A.M."/>
            <person name="Harris D."/>
            <person name="Seeger K."/>
            <person name="Murphy L."/>
            <person name="Rutter S."/>
            <person name="Squares R."/>
            <person name="Quail M.A."/>
            <person name="Saunders E."/>
            <person name="Mavromatis K."/>
            <person name="Brettin T.S."/>
            <person name="Bentley S.D."/>
            <person name="Hothersall J."/>
            <person name="Stephens E."/>
            <person name="Thomas C.M."/>
            <person name="Parkhill J."/>
            <person name="Levy S.B."/>
            <person name="Rainey P.B."/>
            <person name="Thomson N.R."/>
        </authorList>
    </citation>
    <scope>NUCLEOTIDE SEQUENCE [LARGE SCALE GENOMIC DNA]</scope>
    <source>
        <strain>Pf0-1</strain>
    </source>
</reference>
<comment type="function">
    <text evidence="1">Involved in the heme biosynthesis. Catalyzes the aerobic oxidative decarboxylation of propionate groups of rings A and B of coproporphyrinogen-III to yield the vinyl groups in protoporphyrinogen-IX.</text>
</comment>
<comment type="catalytic activity">
    <reaction evidence="1">
        <text>coproporphyrinogen III + O2 + 2 H(+) = protoporphyrinogen IX + 2 CO2 + 2 H2O</text>
        <dbReference type="Rhea" id="RHEA:18257"/>
        <dbReference type="ChEBI" id="CHEBI:15377"/>
        <dbReference type="ChEBI" id="CHEBI:15378"/>
        <dbReference type="ChEBI" id="CHEBI:15379"/>
        <dbReference type="ChEBI" id="CHEBI:16526"/>
        <dbReference type="ChEBI" id="CHEBI:57307"/>
        <dbReference type="ChEBI" id="CHEBI:57309"/>
        <dbReference type="EC" id="1.3.3.3"/>
    </reaction>
</comment>
<comment type="cofactor">
    <cofactor evidence="1">
        <name>a divalent metal cation</name>
        <dbReference type="ChEBI" id="CHEBI:60240"/>
    </cofactor>
</comment>
<comment type="pathway">
    <text evidence="1">Porphyrin-containing compound metabolism; protoporphyrin-IX biosynthesis; protoporphyrinogen-IX from coproporphyrinogen-III (O2 route): step 1/1.</text>
</comment>
<comment type="subunit">
    <text evidence="1">Homodimer.</text>
</comment>
<comment type="subcellular location">
    <subcellularLocation>
        <location evidence="1">Cytoplasm</location>
    </subcellularLocation>
</comment>
<comment type="similarity">
    <text evidence="1">Belongs to the aerobic coproporphyrinogen-III oxidase family.</text>
</comment>
<feature type="chain" id="PRO_1000019489" description="Oxygen-dependent coproporphyrinogen-III oxidase">
    <location>
        <begin position="1"/>
        <end position="304"/>
    </location>
</feature>
<feature type="region of interest" description="Important for dimerization" evidence="1">
    <location>
        <begin position="241"/>
        <end position="276"/>
    </location>
</feature>
<feature type="active site" description="Proton donor" evidence="1">
    <location>
        <position position="107"/>
    </location>
</feature>
<feature type="binding site" evidence="1">
    <location>
        <position position="93"/>
    </location>
    <ligand>
        <name>substrate</name>
    </ligand>
</feature>
<feature type="binding site" evidence="1">
    <location>
        <position position="97"/>
    </location>
    <ligand>
        <name>a divalent metal cation</name>
        <dbReference type="ChEBI" id="CHEBI:60240"/>
    </ligand>
</feature>
<feature type="binding site" evidence="1">
    <location>
        <position position="107"/>
    </location>
    <ligand>
        <name>a divalent metal cation</name>
        <dbReference type="ChEBI" id="CHEBI:60240"/>
    </ligand>
</feature>
<feature type="binding site" evidence="1">
    <location>
        <begin position="109"/>
        <end position="111"/>
    </location>
    <ligand>
        <name>substrate</name>
    </ligand>
</feature>
<feature type="binding site" evidence="1">
    <location>
        <position position="146"/>
    </location>
    <ligand>
        <name>a divalent metal cation</name>
        <dbReference type="ChEBI" id="CHEBI:60240"/>
    </ligand>
</feature>
<feature type="binding site" evidence="1">
    <location>
        <position position="176"/>
    </location>
    <ligand>
        <name>a divalent metal cation</name>
        <dbReference type="ChEBI" id="CHEBI:60240"/>
    </ligand>
</feature>
<feature type="binding site" evidence="1">
    <location>
        <begin position="259"/>
        <end position="261"/>
    </location>
    <ligand>
        <name>substrate</name>
    </ligand>
</feature>
<feature type="site" description="Important for dimerization" evidence="1">
    <location>
        <position position="176"/>
    </location>
</feature>
<proteinExistence type="inferred from homology"/>
<sequence>MTTRTDAVKAYLLDLQDRICAALETEDGGTRFVEDAWTRPAGGGGRTRVIENGTVIEKGGVNFSHVFGSGLPPSASAHRPELAGRGFEALGVSLVIHPHNPHVPTSHANVRFFIAEKEGEEPVWWFGGGFDLTPYYGNEEDCIHWHRVAEKACAPFGPDVYPRYKAWCDTYFHIKHRHEPRGIGGLFFDDLNEWDFDTSFAFMRAIGDAYIDAYLPIVQRRKNDAFTARQREFQEFRRGRYVEFNLVYDRGTLFGLQSGGRTESILMSLPPQVRWAYDWKAEPGSEEARLTEYFLQDRDWLAQA</sequence>
<accession>Q3KKE0</accession>
<name>HEM6_PSEPF</name>
<organism>
    <name type="scientific">Pseudomonas fluorescens (strain Pf0-1)</name>
    <dbReference type="NCBI Taxonomy" id="205922"/>
    <lineage>
        <taxon>Bacteria</taxon>
        <taxon>Pseudomonadati</taxon>
        <taxon>Pseudomonadota</taxon>
        <taxon>Gammaproteobacteria</taxon>
        <taxon>Pseudomonadales</taxon>
        <taxon>Pseudomonadaceae</taxon>
        <taxon>Pseudomonas</taxon>
    </lineage>
</organism>
<protein>
    <recommendedName>
        <fullName evidence="1">Oxygen-dependent coproporphyrinogen-III oxidase</fullName>
        <shortName evidence="1">CPO</shortName>
        <shortName evidence="1">Coprogen oxidase</shortName>
        <shortName evidence="1">Coproporphyrinogenase</shortName>
        <ecNumber evidence="1">1.3.3.3</ecNumber>
    </recommendedName>
</protein>
<keyword id="KW-0963">Cytoplasm</keyword>
<keyword id="KW-0350">Heme biosynthesis</keyword>
<keyword id="KW-0479">Metal-binding</keyword>
<keyword id="KW-0560">Oxidoreductase</keyword>
<keyword id="KW-0627">Porphyrin biosynthesis</keyword>
<evidence type="ECO:0000255" key="1">
    <source>
        <dbReference type="HAMAP-Rule" id="MF_00333"/>
    </source>
</evidence>
<dbReference type="EC" id="1.3.3.3" evidence="1"/>
<dbReference type="EMBL" id="CP000094">
    <property type="protein sequence ID" value="ABA71766.1"/>
    <property type="molecule type" value="Genomic_DNA"/>
</dbReference>
<dbReference type="RefSeq" id="WP_011331750.1">
    <property type="nucleotide sequence ID" value="NC_007492.2"/>
</dbReference>
<dbReference type="SMR" id="Q3KKE0"/>
<dbReference type="KEGG" id="pfo:Pfl01_0022"/>
<dbReference type="eggNOG" id="COG0408">
    <property type="taxonomic scope" value="Bacteria"/>
</dbReference>
<dbReference type="HOGENOM" id="CLU_026169_0_1_6"/>
<dbReference type="UniPathway" id="UPA00251">
    <property type="reaction ID" value="UER00322"/>
</dbReference>
<dbReference type="Proteomes" id="UP000002704">
    <property type="component" value="Chromosome"/>
</dbReference>
<dbReference type="GO" id="GO:0005737">
    <property type="term" value="C:cytoplasm"/>
    <property type="evidence" value="ECO:0007669"/>
    <property type="project" value="UniProtKB-SubCell"/>
</dbReference>
<dbReference type="GO" id="GO:0004109">
    <property type="term" value="F:coproporphyrinogen oxidase activity"/>
    <property type="evidence" value="ECO:0007669"/>
    <property type="project" value="UniProtKB-UniRule"/>
</dbReference>
<dbReference type="GO" id="GO:0046872">
    <property type="term" value="F:metal ion binding"/>
    <property type="evidence" value="ECO:0007669"/>
    <property type="project" value="UniProtKB-KW"/>
</dbReference>
<dbReference type="GO" id="GO:0042803">
    <property type="term" value="F:protein homodimerization activity"/>
    <property type="evidence" value="ECO:0000250"/>
    <property type="project" value="UniProtKB"/>
</dbReference>
<dbReference type="GO" id="GO:0006782">
    <property type="term" value="P:protoporphyrinogen IX biosynthetic process"/>
    <property type="evidence" value="ECO:0007669"/>
    <property type="project" value="UniProtKB-UniRule"/>
</dbReference>
<dbReference type="FunFam" id="3.40.1500.10:FF:000001">
    <property type="entry name" value="Oxygen-dependent coproporphyrinogen-III oxidase"/>
    <property type="match status" value="1"/>
</dbReference>
<dbReference type="Gene3D" id="3.40.1500.10">
    <property type="entry name" value="Coproporphyrinogen III oxidase, aerobic"/>
    <property type="match status" value="1"/>
</dbReference>
<dbReference type="HAMAP" id="MF_00333">
    <property type="entry name" value="Coprogen_oxidas"/>
    <property type="match status" value="1"/>
</dbReference>
<dbReference type="InterPro" id="IPR001260">
    <property type="entry name" value="Coprogen_oxidase_aer"/>
</dbReference>
<dbReference type="InterPro" id="IPR036406">
    <property type="entry name" value="Coprogen_oxidase_aer_sf"/>
</dbReference>
<dbReference type="InterPro" id="IPR018375">
    <property type="entry name" value="Coprogen_oxidase_CS"/>
</dbReference>
<dbReference type="NCBIfam" id="NF003727">
    <property type="entry name" value="PRK05330.1"/>
    <property type="match status" value="1"/>
</dbReference>
<dbReference type="PANTHER" id="PTHR10755">
    <property type="entry name" value="COPROPORPHYRINOGEN III OXIDASE, MITOCHONDRIAL"/>
    <property type="match status" value="1"/>
</dbReference>
<dbReference type="PANTHER" id="PTHR10755:SF0">
    <property type="entry name" value="OXYGEN-DEPENDENT COPROPORPHYRINOGEN-III OXIDASE, MITOCHONDRIAL"/>
    <property type="match status" value="1"/>
</dbReference>
<dbReference type="Pfam" id="PF01218">
    <property type="entry name" value="Coprogen_oxidas"/>
    <property type="match status" value="1"/>
</dbReference>
<dbReference type="PIRSF" id="PIRSF000166">
    <property type="entry name" value="Coproporphyri_ox"/>
    <property type="match status" value="1"/>
</dbReference>
<dbReference type="PRINTS" id="PR00073">
    <property type="entry name" value="COPRGNOXDASE"/>
</dbReference>
<dbReference type="SUPFAM" id="SSF102886">
    <property type="entry name" value="Coproporphyrinogen III oxidase"/>
    <property type="match status" value="1"/>
</dbReference>
<dbReference type="PROSITE" id="PS01021">
    <property type="entry name" value="COPROGEN_OXIDASE"/>
    <property type="match status" value="1"/>
</dbReference>